<comment type="function">
    <text evidence="1">Produces ATP from ADP in the presence of a proton gradient across the membrane.</text>
</comment>
<comment type="subunit">
    <text evidence="1">F-type ATPases have 2 components, CF(1) - the catalytic core - and CF(0) - the membrane proton channel. CF(1) has five subunits: alpha(3), beta(3), gamma(1), delta(1), epsilon(1). CF(0) has three main subunits: a, b and c.</text>
</comment>
<comment type="subcellular location">
    <subcellularLocation>
        <location evidence="1">Cell membrane</location>
        <topology evidence="1">Peripheral membrane protein</topology>
    </subcellularLocation>
</comment>
<comment type="similarity">
    <text evidence="1">Belongs to the ATPase epsilon chain family.</text>
</comment>
<gene>
    <name evidence="1" type="primary">atpC</name>
    <name type="ordered locus">BCQ_5144</name>
</gene>
<sequence>MKTFPVSIVTPDGPVYEKEVEMVSVKAESGEMGILPGHIPTVAPLKISAVRLKNGGHTDYVAVSGGFIEVRPDKVTVLSSSAEEANHIDIHRANEAKRRAEQRLQDKQAHVDFKRAEMALQRAVNRLNVSDMK</sequence>
<feature type="chain" id="PRO_1000146311" description="ATP synthase epsilon chain">
    <location>
        <begin position="1"/>
        <end position="133"/>
    </location>
</feature>
<organism>
    <name type="scientific">Bacillus cereus (strain Q1)</name>
    <dbReference type="NCBI Taxonomy" id="361100"/>
    <lineage>
        <taxon>Bacteria</taxon>
        <taxon>Bacillati</taxon>
        <taxon>Bacillota</taxon>
        <taxon>Bacilli</taxon>
        <taxon>Bacillales</taxon>
        <taxon>Bacillaceae</taxon>
        <taxon>Bacillus</taxon>
        <taxon>Bacillus cereus group</taxon>
    </lineage>
</organism>
<evidence type="ECO:0000255" key="1">
    <source>
        <dbReference type="HAMAP-Rule" id="MF_00530"/>
    </source>
</evidence>
<dbReference type="EMBL" id="CP000227">
    <property type="protein sequence ID" value="ACM15544.1"/>
    <property type="molecule type" value="Genomic_DNA"/>
</dbReference>
<dbReference type="SMR" id="B9IRT6"/>
<dbReference type="KEGG" id="bcq:BCQ_5144"/>
<dbReference type="HOGENOM" id="CLU_084338_1_3_9"/>
<dbReference type="Proteomes" id="UP000000441">
    <property type="component" value="Chromosome"/>
</dbReference>
<dbReference type="GO" id="GO:0005886">
    <property type="term" value="C:plasma membrane"/>
    <property type="evidence" value="ECO:0007669"/>
    <property type="project" value="UniProtKB-SubCell"/>
</dbReference>
<dbReference type="GO" id="GO:0045259">
    <property type="term" value="C:proton-transporting ATP synthase complex"/>
    <property type="evidence" value="ECO:0007669"/>
    <property type="project" value="UniProtKB-KW"/>
</dbReference>
<dbReference type="GO" id="GO:0005524">
    <property type="term" value="F:ATP binding"/>
    <property type="evidence" value="ECO:0007669"/>
    <property type="project" value="UniProtKB-UniRule"/>
</dbReference>
<dbReference type="GO" id="GO:0046933">
    <property type="term" value="F:proton-transporting ATP synthase activity, rotational mechanism"/>
    <property type="evidence" value="ECO:0007669"/>
    <property type="project" value="UniProtKB-UniRule"/>
</dbReference>
<dbReference type="CDD" id="cd12152">
    <property type="entry name" value="F1-ATPase_delta"/>
    <property type="match status" value="1"/>
</dbReference>
<dbReference type="FunFam" id="1.20.5.440:FF:000001">
    <property type="entry name" value="ATP synthase epsilon chain"/>
    <property type="match status" value="1"/>
</dbReference>
<dbReference type="FunFam" id="2.60.15.10:FF:000001">
    <property type="entry name" value="ATP synthase epsilon chain"/>
    <property type="match status" value="1"/>
</dbReference>
<dbReference type="Gene3D" id="1.20.5.440">
    <property type="entry name" value="ATP synthase delta/epsilon subunit, C-terminal domain"/>
    <property type="match status" value="1"/>
</dbReference>
<dbReference type="Gene3D" id="2.60.15.10">
    <property type="entry name" value="F0F1 ATP synthase delta/epsilon subunit, N-terminal"/>
    <property type="match status" value="1"/>
</dbReference>
<dbReference type="HAMAP" id="MF_00530">
    <property type="entry name" value="ATP_synth_epsil_bac"/>
    <property type="match status" value="1"/>
</dbReference>
<dbReference type="InterPro" id="IPR036794">
    <property type="entry name" value="ATP_F1_dsu/esu_C_sf"/>
</dbReference>
<dbReference type="InterPro" id="IPR001469">
    <property type="entry name" value="ATP_synth_F1_dsu/esu"/>
</dbReference>
<dbReference type="InterPro" id="IPR020546">
    <property type="entry name" value="ATP_synth_F1_dsu/esu_N"/>
</dbReference>
<dbReference type="InterPro" id="IPR020547">
    <property type="entry name" value="ATP_synth_F1_esu_C"/>
</dbReference>
<dbReference type="InterPro" id="IPR036771">
    <property type="entry name" value="ATPsynth_dsu/esu_N"/>
</dbReference>
<dbReference type="NCBIfam" id="TIGR01216">
    <property type="entry name" value="ATP_synt_epsi"/>
    <property type="match status" value="1"/>
</dbReference>
<dbReference type="NCBIfam" id="NF001846">
    <property type="entry name" value="PRK00571.1-3"/>
    <property type="match status" value="1"/>
</dbReference>
<dbReference type="NCBIfam" id="NF009980">
    <property type="entry name" value="PRK13446.1"/>
    <property type="match status" value="1"/>
</dbReference>
<dbReference type="PANTHER" id="PTHR13822">
    <property type="entry name" value="ATP SYNTHASE DELTA/EPSILON CHAIN"/>
    <property type="match status" value="1"/>
</dbReference>
<dbReference type="PANTHER" id="PTHR13822:SF10">
    <property type="entry name" value="ATP SYNTHASE EPSILON CHAIN, CHLOROPLASTIC"/>
    <property type="match status" value="1"/>
</dbReference>
<dbReference type="Pfam" id="PF00401">
    <property type="entry name" value="ATP-synt_DE"/>
    <property type="match status" value="1"/>
</dbReference>
<dbReference type="Pfam" id="PF02823">
    <property type="entry name" value="ATP-synt_DE_N"/>
    <property type="match status" value="1"/>
</dbReference>
<dbReference type="SUPFAM" id="SSF46604">
    <property type="entry name" value="Epsilon subunit of F1F0-ATP synthase C-terminal domain"/>
    <property type="match status" value="1"/>
</dbReference>
<dbReference type="SUPFAM" id="SSF51344">
    <property type="entry name" value="Epsilon subunit of F1F0-ATP synthase N-terminal domain"/>
    <property type="match status" value="1"/>
</dbReference>
<reference key="1">
    <citation type="journal article" date="2009" name="J. Bacteriol.">
        <title>Complete genome sequence of the extremophilic Bacillus cereus strain Q1 with industrial applications.</title>
        <authorList>
            <person name="Xiong Z."/>
            <person name="Jiang Y."/>
            <person name="Qi D."/>
            <person name="Lu H."/>
            <person name="Yang F."/>
            <person name="Yang J."/>
            <person name="Chen L."/>
            <person name="Sun L."/>
            <person name="Xu X."/>
            <person name="Xue Y."/>
            <person name="Zhu Y."/>
            <person name="Jin Q."/>
        </authorList>
    </citation>
    <scope>NUCLEOTIDE SEQUENCE [LARGE SCALE GENOMIC DNA]</scope>
    <source>
        <strain>Q1</strain>
    </source>
</reference>
<proteinExistence type="inferred from homology"/>
<keyword id="KW-0066">ATP synthesis</keyword>
<keyword id="KW-1003">Cell membrane</keyword>
<keyword id="KW-0139">CF(1)</keyword>
<keyword id="KW-0375">Hydrogen ion transport</keyword>
<keyword id="KW-0406">Ion transport</keyword>
<keyword id="KW-0472">Membrane</keyword>
<keyword id="KW-0813">Transport</keyword>
<protein>
    <recommendedName>
        <fullName evidence="1">ATP synthase epsilon chain</fullName>
    </recommendedName>
    <alternativeName>
        <fullName evidence="1">ATP synthase F1 sector epsilon subunit</fullName>
    </alternativeName>
    <alternativeName>
        <fullName evidence="1">F-ATPase epsilon subunit</fullName>
    </alternativeName>
</protein>
<accession>B9IRT6</accession>
<name>ATPE_BACCQ</name>